<keyword id="KW-0274">FAD</keyword>
<keyword id="KW-0285">Flavoprotein</keyword>
<keyword id="KW-0560">Oxidoreductase</keyword>
<keyword id="KW-1185">Reference proteome</keyword>
<keyword id="KW-0816">Tricarboxylic acid cycle</keyword>
<comment type="catalytic activity">
    <reaction evidence="1">
        <text>(S)-malate + a quinone = a quinol + oxaloacetate</text>
        <dbReference type="Rhea" id="RHEA:46012"/>
        <dbReference type="ChEBI" id="CHEBI:15589"/>
        <dbReference type="ChEBI" id="CHEBI:16452"/>
        <dbReference type="ChEBI" id="CHEBI:24646"/>
        <dbReference type="ChEBI" id="CHEBI:132124"/>
        <dbReference type="EC" id="1.1.5.4"/>
    </reaction>
</comment>
<comment type="cofactor">
    <cofactor evidence="1">
        <name>FAD</name>
        <dbReference type="ChEBI" id="CHEBI:57692"/>
    </cofactor>
</comment>
<comment type="pathway">
    <text evidence="1">Carbohydrate metabolism; tricarboxylic acid cycle; oxaloacetate from (S)-malate (quinone route): step 1/1.</text>
</comment>
<comment type="similarity">
    <text evidence="1">Belongs to the MQO family.</text>
</comment>
<proteinExistence type="inferred from homology"/>
<gene>
    <name evidence="1" type="primary">mqo</name>
    <name type="ordered locus">Z3468</name>
    <name type="ordered locus">ECs3099</name>
</gene>
<evidence type="ECO:0000255" key="1">
    <source>
        <dbReference type="HAMAP-Rule" id="MF_00212"/>
    </source>
</evidence>
<evidence type="ECO:0000256" key="2">
    <source>
        <dbReference type="SAM" id="MobiDB-lite"/>
    </source>
</evidence>
<reference key="1">
    <citation type="journal article" date="2001" name="Nature">
        <title>Genome sequence of enterohaemorrhagic Escherichia coli O157:H7.</title>
        <authorList>
            <person name="Perna N.T."/>
            <person name="Plunkett G. III"/>
            <person name="Burland V."/>
            <person name="Mau B."/>
            <person name="Glasner J.D."/>
            <person name="Rose D.J."/>
            <person name="Mayhew G.F."/>
            <person name="Evans P.S."/>
            <person name="Gregor J."/>
            <person name="Kirkpatrick H.A."/>
            <person name="Posfai G."/>
            <person name="Hackett J."/>
            <person name="Klink S."/>
            <person name="Boutin A."/>
            <person name="Shao Y."/>
            <person name="Miller L."/>
            <person name="Grotbeck E.J."/>
            <person name="Davis N.W."/>
            <person name="Lim A."/>
            <person name="Dimalanta E.T."/>
            <person name="Potamousis K."/>
            <person name="Apodaca J."/>
            <person name="Anantharaman T.S."/>
            <person name="Lin J."/>
            <person name="Yen G."/>
            <person name="Schwartz D.C."/>
            <person name="Welch R.A."/>
            <person name="Blattner F.R."/>
        </authorList>
    </citation>
    <scope>NUCLEOTIDE SEQUENCE [LARGE SCALE GENOMIC DNA]</scope>
    <source>
        <strain>O157:H7 / EDL933 / ATCC 700927 / EHEC</strain>
    </source>
</reference>
<reference key="2">
    <citation type="journal article" date="2001" name="DNA Res.">
        <title>Complete genome sequence of enterohemorrhagic Escherichia coli O157:H7 and genomic comparison with a laboratory strain K-12.</title>
        <authorList>
            <person name="Hayashi T."/>
            <person name="Makino K."/>
            <person name="Ohnishi M."/>
            <person name="Kurokawa K."/>
            <person name="Ishii K."/>
            <person name="Yokoyama K."/>
            <person name="Han C.-G."/>
            <person name="Ohtsubo E."/>
            <person name="Nakayama K."/>
            <person name="Murata T."/>
            <person name="Tanaka M."/>
            <person name="Tobe T."/>
            <person name="Iida T."/>
            <person name="Takami H."/>
            <person name="Honda T."/>
            <person name="Sasakawa C."/>
            <person name="Ogasawara N."/>
            <person name="Yasunaga T."/>
            <person name="Kuhara S."/>
            <person name="Shiba T."/>
            <person name="Hattori M."/>
            <person name="Shinagawa H."/>
        </authorList>
    </citation>
    <scope>NUCLEOTIDE SEQUENCE [LARGE SCALE GENOMIC DNA]</scope>
    <source>
        <strain>O157:H7 / Sakai / RIMD 0509952 / EHEC</strain>
    </source>
</reference>
<accession>Q8XE45</accession>
<dbReference type="EC" id="1.1.5.4" evidence="1"/>
<dbReference type="EMBL" id="AE005174">
    <property type="protein sequence ID" value="AAG57345.1"/>
    <property type="molecule type" value="Genomic_DNA"/>
</dbReference>
<dbReference type="EMBL" id="BA000007">
    <property type="protein sequence ID" value="BAB36522.1"/>
    <property type="molecule type" value="Genomic_DNA"/>
</dbReference>
<dbReference type="PIR" id="C91016">
    <property type="entry name" value="C91016"/>
</dbReference>
<dbReference type="PIR" id="E85860">
    <property type="entry name" value="E85860"/>
</dbReference>
<dbReference type="RefSeq" id="NP_311126.1">
    <property type="nucleotide sequence ID" value="NC_002695.1"/>
</dbReference>
<dbReference type="RefSeq" id="WP_000758066.1">
    <property type="nucleotide sequence ID" value="NZ_SWKA01000005.1"/>
</dbReference>
<dbReference type="SMR" id="Q8XE45"/>
<dbReference type="STRING" id="155864.Z3468"/>
<dbReference type="GeneID" id="916805"/>
<dbReference type="KEGG" id="ece:Z3468"/>
<dbReference type="KEGG" id="ecs:ECs_3099"/>
<dbReference type="PATRIC" id="fig|386585.9.peg.3233"/>
<dbReference type="eggNOG" id="COG0579">
    <property type="taxonomic scope" value="Bacteria"/>
</dbReference>
<dbReference type="HOGENOM" id="CLU_028151_0_0_6"/>
<dbReference type="OMA" id="PHLDTRW"/>
<dbReference type="UniPathway" id="UPA00223">
    <property type="reaction ID" value="UER01008"/>
</dbReference>
<dbReference type="Proteomes" id="UP000000558">
    <property type="component" value="Chromosome"/>
</dbReference>
<dbReference type="Proteomes" id="UP000002519">
    <property type="component" value="Chromosome"/>
</dbReference>
<dbReference type="GO" id="GO:0047545">
    <property type="term" value="F:2-hydroxyglutarate dehydrogenase activity"/>
    <property type="evidence" value="ECO:0007669"/>
    <property type="project" value="TreeGrafter"/>
</dbReference>
<dbReference type="GO" id="GO:0008924">
    <property type="term" value="F:L-malate dehydrogenase (quinone) activity"/>
    <property type="evidence" value="ECO:0007669"/>
    <property type="project" value="UniProtKB-UniRule"/>
</dbReference>
<dbReference type="GO" id="GO:0006099">
    <property type="term" value="P:tricarboxylic acid cycle"/>
    <property type="evidence" value="ECO:0007669"/>
    <property type="project" value="UniProtKB-UniRule"/>
</dbReference>
<dbReference type="Gene3D" id="3.30.9.10">
    <property type="entry name" value="D-Amino Acid Oxidase, subunit A, domain 2"/>
    <property type="match status" value="1"/>
</dbReference>
<dbReference type="Gene3D" id="3.50.50.60">
    <property type="entry name" value="FAD/NAD(P)-binding domain"/>
    <property type="match status" value="1"/>
</dbReference>
<dbReference type="HAMAP" id="MF_00212">
    <property type="entry name" value="MQO"/>
    <property type="match status" value="1"/>
</dbReference>
<dbReference type="InterPro" id="IPR036188">
    <property type="entry name" value="FAD/NAD-bd_sf"/>
</dbReference>
<dbReference type="InterPro" id="IPR006231">
    <property type="entry name" value="MQO"/>
</dbReference>
<dbReference type="NCBIfam" id="TIGR01320">
    <property type="entry name" value="mal_quin_oxido"/>
    <property type="match status" value="1"/>
</dbReference>
<dbReference type="NCBIfam" id="NF003603">
    <property type="entry name" value="PRK05257.1-1"/>
    <property type="match status" value="1"/>
</dbReference>
<dbReference type="NCBIfam" id="NF003605">
    <property type="entry name" value="PRK05257.1-4"/>
    <property type="match status" value="1"/>
</dbReference>
<dbReference type="NCBIfam" id="NF003606">
    <property type="entry name" value="PRK05257.2-1"/>
    <property type="match status" value="1"/>
</dbReference>
<dbReference type="NCBIfam" id="NF003608">
    <property type="entry name" value="PRK05257.2-4"/>
    <property type="match status" value="1"/>
</dbReference>
<dbReference type="NCBIfam" id="NF003611">
    <property type="entry name" value="PRK05257.3-2"/>
    <property type="match status" value="1"/>
</dbReference>
<dbReference type="NCBIfam" id="NF009875">
    <property type="entry name" value="PRK13339.1"/>
    <property type="match status" value="1"/>
</dbReference>
<dbReference type="PANTHER" id="PTHR43104">
    <property type="entry name" value="L-2-HYDROXYGLUTARATE DEHYDROGENASE, MITOCHONDRIAL"/>
    <property type="match status" value="1"/>
</dbReference>
<dbReference type="PANTHER" id="PTHR43104:SF2">
    <property type="entry name" value="L-2-HYDROXYGLUTARATE DEHYDROGENASE, MITOCHONDRIAL"/>
    <property type="match status" value="1"/>
</dbReference>
<dbReference type="Pfam" id="PF06039">
    <property type="entry name" value="Mqo"/>
    <property type="match status" value="1"/>
</dbReference>
<dbReference type="SUPFAM" id="SSF51905">
    <property type="entry name" value="FAD/NAD(P)-binding domain"/>
    <property type="match status" value="1"/>
</dbReference>
<name>MQO_ECO57</name>
<protein>
    <recommendedName>
        <fullName>Malate:quinone oxidoreductase</fullName>
        <ecNumber evidence="1">1.1.5.4</ecNumber>
    </recommendedName>
    <alternativeName>
        <fullName evidence="1">MQO</fullName>
    </alternativeName>
    <alternativeName>
        <fullName evidence="1">Malate dehydrogenase [quinone]</fullName>
    </alternativeName>
</protein>
<sequence>MKKVTAMLFSMAVGLNAVSMAAKAKASEEQETDVLLIGGGIMSATLGTYLRELEPEWSMTMVERLEGVAQESSNGWNNAGTGHSALMELNYTPQNADGSISIEKAVAINEAFQISRQFWAHQVERGVLRTPRSFINTVPHMSFVWGEDNVNFLRARYAALQQSSLFRGMRYSEDHAQIKEWAPLVMEGRDPQQKVAATRTEIGTDVNYGEITRQLIASLQKKSNFSLQLSSEVRALKRNDDNTWTVTVADLKNGTAQNIRAKFVFIGAGGAALKLLQESGIPEAKDYAGFPVGGQFLVSENPDVVNHHLAKVYGKASVGAPPMSVPHIDTRVLDGKRVVLFGPFATFSTKFLKNGSLWDLMSSTTTSNVMPMMHVGLDNFDLVKYLVSQVMLSEEDRFEALKEYYPQAKKEDWRLWQAGQRVQIIKRDADKGGVLRLGTEVVSDQQGTIAALLGASPGASTAAPIMLNLLEKVFGDRVSSPQWQATLKAIVPSYGRKLNGDVAATERELQYTSEVLGLKYDKPQAADSTPKPQLKPQPVQKEVADIAL</sequence>
<feature type="chain" id="PRO_0000128714" description="Malate:quinone oxidoreductase">
    <location>
        <begin position="1"/>
        <end position="548"/>
    </location>
</feature>
<feature type="region of interest" description="Disordered" evidence="2">
    <location>
        <begin position="521"/>
        <end position="548"/>
    </location>
</feature>
<feature type="compositionally biased region" description="Low complexity" evidence="2">
    <location>
        <begin position="530"/>
        <end position="541"/>
    </location>
</feature>
<organism>
    <name type="scientific">Escherichia coli O157:H7</name>
    <dbReference type="NCBI Taxonomy" id="83334"/>
    <lineage>
        <taxon>Bacteria</taxon>
        <taxon>Pseudomonadati</taxon>
        <taxon>Pseudomonadota</taxon>
        <taxon>Gammaproteobacteria</taxon>
        <taxon>Enterobacterales</taxon>
        <taxon>Enterobacteriaceae</taxon>
        <taxon>Escherichia</taxon>
    </lineage>
</organism>